<reference key="1">
    <citation type="journal article" date="1987" name="Science">
        <title>D-alanine in the frog skin peptide dermorphin is derived from L-alanine in the precursor.</title>
        <authorList>
            <person name="Richter K."/>
            <person name="Egger R."/>
            <person name="Kreil G."/>
        </authorList>
    </citation>
    <scope>NUCLEOTIDE SEQUENCE [MRNA]</scope>
    <source>
        <tissue>Skin</tissue>
    </source>
</reference>
<reference key="2">
    <citation type="journal article" date="1981" name="Int. J. Pept. Protein Res.">
        <title>Amino acid composition and sequence of dermorphin, a novel opiate-like peptide from the skin of Phyllomedusa sauvagei.</title>
        <authorList>
            <person name="Montecucchi P.C."/>
            <person name="de Castiglione R."/>
            <person name="Piani S."/>
            <person name="Gozzini L."/>
            <person name="Erspamer V."/>
        </authorList>
    </citation>
    <scope>PROTEIN SEQUENCE OF 48-54; 83-89; 118-124; 153-159 AND 188-194</scope>
    <scope>D-AMINO ACID AT ALA-49; ALA-84; ALA-119; ALA-154 AND ALA-189</scope>
    <scope>AMIDATION AT SER-54; SER-89; SER-124; SER-159 AND SER-194</scope>
    <scope>FUNCTION</scope>
    <source>
        <tissue>Skin secretion</tissue>
    </source>
</reference>
<name>DEM2_PHYSA</name>
<feature type="signal peptide" evidence="1">
    <location>
        <begin position="1"/>
        <end position="20"/>
    </location>
</feature>
<feature type="propeptide" id="PRO_0000010244">
    <location>
        <begin position="21"/>
        <end position="45"/>
    </location>
</feature>
<feature type="peptide" id="PRO_0000010245" description="Dermorphin" evidence="3">
    <location>
        <begin position="48"/>
        <end position="54"/>
    </location>
</feature>
<feature type="propeptide" id="PRO_0000010246">
    <location>
        <begin position="56"/>
        <end position="80"/>
    </location>
</feature>
<feature type="peptide" id="PRO_0000010247" description="Dermorphin" evidence="3">
    <location>
        <begin position="83"/>
        <end position="89"/>
    </location>
</feature>
<feature type="propeptide" id="PRO_0000010248">
    <location>
        <begin position="91"/>
        <end position="115"/>
    </location>
</feature>
<feature type="peptide" id="PRO_0000010249" description="Dermorphin" evidence="3">
    <location>
        <begin position="118"/>
        <end position="124"/>
    </location>
</feature>
<feature type="propeptide" id="PRO_0000010250">
    <location>
        <begin position="126"/>
        <end position="150"/>
    </location>
</feature>
<feature type="peptide" id="PRO_0000010251" description="Dermorphin">
    <location>
        <begin position="153"/>
        <end position="159"/>
    </location>
</feature>
<feature type="propeptide" id="PRO_0000010252">
    <location>
        <begin position="161"/>
        <end position="185"/>
    </location>
</feature>
<feature type="peptide" id="PRO_0000010253" description="Dermorphin">
    <location>
        <begin position="188"/>
        <end position="194"/>
    </location>
</feature>
<feature type="propeptide" id="PRO_0000010254">
    <location>
        <begin position="196"/>
        <end position="198"/>
    </location>
</feature>
<feature type="region of interest" description="Disordered" evidence="2">
    <location>
        <begin position="24"/>
        <end position="198"/>
    </location>
</feature>
<feature type="compositionally biased region" description="Basic and acidic residues" evidence="2">
    <location>
        <begin position="56"/>
        <end position="65"/>
    </location>
</feature>
<feature type="compositionally biased region" description="Acidic residues" evidence="2">
    <location>
        <begin position="100"/>
        <end position="109"/>
    </location>
</feature>
<feature type="compositionally biased region" description="Basic and acidic residues" evidence="2">
    <location>
        <begin position="126"/>
        <end position="135"/>
    </location>
</feature>
<feature type="compositionally biased region" description="Acidic residues" evidence="2">
    <location>
        <begin position="170"/>
        <end position="179"/>
    </location>
</feature>
<feature type="modified residue" description="D-alanine (Ala)" evidence="4">
    <location>
        <position position="49"/>
    </location>
</feature>
<feature type="modified residue" description="Serine amide" evidence="3 4">
    <location>
        <position position="54"/>
    </location>
</feature>
<feature type="modified residue" description="D-alanine (Ala)" evidence="3 4">
    <location>
        <position position="84"/>
    </location>
</feature>
<feature type="modified residue" description="Serine amide" evidence="3 4">
    <location>
        <position position="89"/>
    </location>
</feature>
<feature type="modified residue" description="D-alanine (Ala)" evidence="3 4">
    <location>
        <position position="119"/>
    </location>
</feature>
<feature type="modified residue" description="Serine amide" evidence="3 4">
    <location>
        <position position="124"/>
    </location>
</feature>
<feature type="modified residue" description="D-alanine (Ala)" evidence="4">
    <location>
        <position position="154"/>
    </location>
</feature>
<feature type="modified residue" description="Serine amide" evidence="4">
    <location>
        <position position="159"/>
    </location>
</feature>
<feature type="modified residue" description="D-alanine (Ala)" evidence="4">
    <location>
        <position position="189"/>
    </location>
</feature>
<feature type="modified residue" description="Serine amide" evidence="4">
    <location>
        <position position="194"/>
    </location>
</feature>
<feature type="non-terminal residue">
    <location>
        <position position="198"/>
    </location>
</feature>
<protein>
    <recommendedName>
        <fullName>Dermorphin-2</fullName>
    </recommendedName>
    <component>
        <recommendedName>
            <fullName>Dermorphin</fullName>
        </recommendedName>
    </component>
</protein>
<proteinExistence type="evidence at protein level"/>
<sequence>MSFLKKSLLLILFLGLVSLSVCKEEKRVSEEENENEENHEEGSEMKRYAFGYPSGEAKKIKRESEEEKEIEENHEEGSEMKRYAFGYPSGEAKKIKRESEEENENEENHEEGSEMKRYAFGYPSGEAKKIKRESEEEKEIEENHEEGSEMKRYAFGYPSGEAKKIKRESEEENENEENHEEGSEMKRYAFGYPSGEAK</sequence>
<accession>P05421</accession>
<comment type="function">
    <text evidence="4">Dermorphin has a very potent opiate-like activity. It has high affinity and selectivity for mu-type opioid receptors.</text>
</comment>
<comment type="subcellular location">
    <subcellularLocation>
        <location>Secreted</location>
    </subcellularLocation>
</comment>
<comment type="tissue specificity">
    <text>Expressed by the skin glands.</text>
</comment>
<comment type="similarity">
    <text evidence="5">Belongs to the frog skin active peptide (FSAP) family. Dermorphin subfamily.</text>
</comment>
<evidence type="ECO:0000255" key="1"/>
<evidence type="ECO:0000256" key="2">
    <source>
        <dbReference type="SAM" id="MobiDB-lite"/>
    </source>
</evidence>
<evidence type="ECO:0000269" key="3">
    <source>
    </source>
</evidence>
<evidence type="ECO:0000269" key="4">
    <source>
    </source>
</evidence>
<evidence type="ECO:0000305" key="5"/>
<dbReference type="EMBL" id="M18030">
    <property type="protein sequence ID" value="AAA49452.1"/>
    <property type="molecule type" value="mRNA"/>
</dbReference>
<dbReference type="PIR" id="B27784">
    <property type="entry name" value="B27784"/>
</dbReference>
<dbReference type="GO" id="GO:0005576">
    <property type="term" value="C:extracellular region"/>
    <property type="evidence" value="ECO:0000314"/>
    <property type="project" value="UniProtKB"/>
</dbReference>
<dbReference type="GO" id="GO:0001515">
    <property type="term" value="F:opioid peptide activity"/>
    <property type="evidence" value="ECO:0000314"/>
    <property type="project" value="UniProtKB"/>
</dbReference>
<dbReference type="GO" id="GO:0006952">
    <property type="term" value="P:defense response"/>
    <property type="evidence" value="ECO:0000314"/>
    <property type="project" value="UniProtKB"/>
</dbReference>
<dbReference type="GO" id="GO:0007218">
    <property type="term" value="P:neuropeptide signaling pathway"/>
    <property type="evidence" value="ECO:0000314"/>
    <property type="project" value="UniProtKB"/>
</dbReference>
<dbReference type="InterPro" id="IPR004275">
    <property type="entry name" value="Frog_antimicrobial_propeptide"/>
</dbReference>
<dbReference type="Pfam" id="PF03032">
    <property type="entry name" value="FSAP_sig_propep"/>
    <property type="match status" value="1"/>
</dbReference>
<keyword id="KW-0027">Amidation</keyword>
<keyword id="KW-0878">Amphibian defense peptide</keyword>
<keyword id="KW-0165">Cleavage on pair of basic residues</keyword>
<keyword id="KW-0208">D-amino acid</keyword>
<keyword id="KW-0903">Direct protein sequencing</keyword>
<keyword id="KW-0257">Endorphin</keyword>
<keyword id="KW-0555">Opioid peptide</keyword>
<keyword id="KW-0677">Repeat</keyword>
<keyword id="KW-0964">Secreted</keyword>
<keyword id="KW-0732">Signal</keyword>
<organism>
    <name type="scientific">Phyllomedusa sauvagei</name>
    <name type="common">Sauvage's leaf frog</name>
    <dbReference type="NCBI Taxonomy" id="8395"/>
    <lineage>
        <taxon>Eukaryota</taxon>
        <taxon>Metazoa</taxon>
        <taxon>Chordata</taxon>
        <taxon>Craniata</taxon>
        <taxon>Vertebrata</taxon>
        <taxon>Euteleostomi</taxon>
        <taxon>Amphibia</taxon>
        <taxon>Batrachia</taxon>
        <taxon>Anura</taxon>
        <taxon>Neobatrachia</taxon>
        <taxon>Hyloidea</taxon>
        <taxon>Hylidae</taxon>
        <taxon>Phyllomedusinae</taxon>
        <taxon>Phyllomedusa</taxon>
    </lineage>
</organism>